<reference key="1">
    <citation type="journal article" date="2000" name="Nucleic Acids Res.">
        <title>Cloning and characterization of the histone-fold proteins YBL1 and YCL1.</title>
        <authorList>
            <person name="Bolognese F."/>
            <person name="Imbriano C."/>
            <person name="Caretti G."/>
            <person name="Mantovani R."/>
        </authorList>
    </citation>
    <scope>NUCLEOTIDE SEQUENCE [MRNA]</scope>
    <source>
        <tissue>B-cell lymphoma</tissue>
    </source>
</reference>
<reference key="2">
    <citation type="journal article" date="2005" name="Science">
        <title>The transcriptional landscape of the mammalian genome.</title>
        <authorList>
            <person name="Carninci P."/>
            <person name="Kasukawa T."/>
            <person name="Katayama S."/>
            <person name="Gough J."/>
            <person name="Frith M.C."/>
            <person name="Maeda N."/>
            <person name="Oyama R."/>
            <person name="Ravasi T."/>
            <person name="Lenhard B."/>
            <person name="Wells C."/>
            <person name="Kodzius R."/>
            <person name="Shimokawa K."/>
            <person name="Bajic V.B."/>
            <person name="Brenner S.E."/>
            <person name="Batalov S."/>
            <person name="Forrest A.R."/>
            <person name="Zavolan M."/>
            <person name="Davis M.J."/>
            <person name="Wilming L.G."/>
            <person name="Aidinis V."/>
            <person name="Allen J.E."/>
            <person name="Ambesi-Impiombato A."/>
            <person name="Apweiler R."/>
            <person name="Aturaliya R.N."/>
            <person name="Bailey T.L."/>
            <person name="Bansal M."/>
            <person name="Baxter L."/>
            <person name="Beisel K.W."/>
            <person name="Bersano T."/>
            <person name="Bono H."/>
            <person name="Chalk A.M."/>
            <person name="Chiu K.P."/>
            <person name="Choudhary V."/>
            <person name="Christoffels A."/>
            <person name="Clutterbuck D.R."/>
            <person name="Crowe M.L."/>
            <person name="Dalla E."/>
            <person name="Dalrymple B.P."/>
            <person name="de Bono B."/>
            <person name="Della Gatta G."/>
            <person name="di Bernardo D."/>
            <person name="Down T."/>
            <person name="Engstrom P."/>
            <person name="Fagiolini M."/>
            <person name="Faulkner G."/>
            <person name="Fletcher C.F."/>
            <person name="Fukushima T."/>
            <person name="Furuno M."/>
            <person name="Futaki S."/>
            <person name="Gariboldi M."/>
            <person name="Georgii-Hemming P."/>
            <person name="Gingeras T.R."/>
            <person name="Gojobori T."/>
            <person name="Green R.E."/>
            <person name="Gustincich S."/>
            <person name="Harbers M."/>
            <person name="Hayashi Y."/>
            <person name="Hensch T.K."/>
            <person name="Hirokawa N."/>
            <person name="Hill D."/>
            <person name="Huminiecki L."/>
            <person name="Iacono M."/>
            <person name="Ikeo K."/>
            <person name="Iwama A."/>
            <person name="Ishikawa T."/>
            <person name="Jakt M."/>
            <person name="Kanapin A."/>
            <person name="Katoh M."/>
            <person name="Kawasawa Y."/>
            <person name="Kelso J."/>
            <person name="Kitamura H."/>
            <person name="Kitano H."/>
            <person name="Kollias G."/>
            <person name="Krishnan S.P."/>
            <person name="Kruger A."/>
            <person name="Kummerfeld S.K."/>
            <person name="Kurochkin I.V."/>
            <person name="Lareau L.F."/>
            <person name="Lazarevic D."/>
            <person name="Lipovich L."/>
            <person name="Liu J."/>
            <person name="Liuni S."/>
            <person name="McWilliam S."/>
            <person name="Madan Babu M."/>
            <person name="Madera M."/>
            <person name="Marchionni L."/>
            <person name="Matsuda H."/>
            <person name="Matsuzawa S."/>
            <person name="Miki H."/>
            <person name="Mignone F."/>
            <person name="Miyake S."/>
            <person name="Morris K."/>
            <person name="Mottagui-Tabar S."/>
            <person name="Mulder N."/>
            <person name="Nakano N."/>
            <person name="Nakauchi H."/>
            <person name="Ng P."/>
            <person name="Nilsson R."/>
            <person name="Nishiguchi S."/>
            <person name="Nishikawa S."/>
            <person name="Nori F."/>
            <person name="Ohara O."/>
            <person name="Okazaki Y."/>
            <person name="Orlando V."/>
            <person name="Pang K.C."/>
            <person name="Pavan W.J."/>
            <person name="Pavesi G."/>
            <person name="Pesole G."/>
            <person name="Petrovsky N."/>
            <person name="Piazza S."/>
            <person name="Reed J."/>
            <person name="Reid J.F."/>
            <person name="Ring B.Z."/>
            <person name="Ringwald M."/>
            <person name="Rost B."/>
            <person name="Ruan Y."/>
            <person name="Salzberg S.L."/>
            <person name="Sandelin A."/>
            <person name="Schneider C."/>
            <person name="Schoenbach C."/>
            <person name="Sekiguchi K."/>
            <person name="Semple C.A."/>
            <person name="Seno S."/>
            <person name="Sessa L."/>
            <person name="Sheng Y."/>
            <person name="Shibata Y."/>
            <person name="Shimada H."/>
            <person name="Shimada K."/>
            <person name="Silva D."/>
            <person name="Sinclair B."/>
            <person name="Sperling S."/>
            <person name="Stupka E."/>
            <person name="Sugiura K."/>
            <person name="Sultana R."/>
            <person name="Takenaka Y."/>
            <person name="Taki K."/>
            <person name="Tammoja K."/>
            <person name="Tan S.L."/>
            <person name="Tang S."/>
            <person name="Taylor M.S."/>
            <person name="Tegner J."/>
            <person name="Teichmann S.A."/>
            <person name="Ueda H.R."/>
            <person name="van Nimwegen E."/>
            <person name="Verardo R."/>
            <person name="Wei C.L."/>
            <person name="Yagi K."/>
            <person name="Yamanishi H."/>
            <person name="Zabarovsky E."/>
            <person name="Zhu S."/>
            <person name="Zimmer A."/>
            <person name="Hide W."/>
            <person name="Bult C."/>
            <person name="Grimmond S.M."/>
            <person name="Teasdale R.D."/>
            <person name="Liu E.T."/>
            <person name="Brusic V."/>
            <person name="Quackenbush J."/>
            <person name="Wahlestedt C."/>
            <person name="Mattick J.S."/>
            <person name="Hume D.A."/>
            <person name="Kai C."/>
            <person name="Sasaki D."/>
            <person name="Tomaru Y."/>
            <person name="Fukuda S."/>
            <person name="Kanamori-Katayama M."/>
            <person name="Suzuki M."/>
            <person name="Aoki J."/>
            <person name="Arakawa T."/>
            <person name="Iida J."/>
            <person name="Imamura K."/>
            <person name="Itoh M."/>
            <person name="Kato T."/>
            <person name="Kawaji H."/>
            <person name="Kawagashira N."/>
            <person name="Kawashima T."/>
            <person name="Kojima M."/>
            <person name="Kondo S."/>
            <person name="Konno H."/>
            <person name="Nakano K."/>
            <person name="Ninomiya N."/>
            <person name="Nishio T."/>
            <person name="Okada M."/>
            <person name="Plessy C."/>
            <person name="Shibata K."/>
            <person name="Shiraki T."/>
            <person name="Suzuki S."/>
            <person name="Tagami M."/>
            <person name="Waki K."/>
            <person name="Watahiki A."/>
            <person name="Okamura-Oho Y."/>
            <person name="Suzuki H."/>
            <person name="Kawai J."/>
            <person name="Hayashizaki Y."/>
        </authorList>
    </citation>
    <scope>NUCLEOTIDE SEQUENCE [LARGE SCALE MRNA]</scope>
    <source>
        <strain>C57BL/6J</strain>
        <tissue>Embryonic stem cell</tissue>
    </source>
</reference>
<reference key="3">
    <citation type="journal article" date="2004" name="Genome Res.">
        <title>The status, quality, and expansion of the NIH full-length cDNA project: the Mammalian Gene Collection (MGC).</title>
        <authorList>
            <consortium name="The MGC Project Team"/>
        </authorList>
    </citation>
    <scope>NUCLEOTIDE SEQUENCE [LARGE SCALE MRNA]</scope>
    <source>
        <tissue>Mammary gland</tissue>
        <tissue>Testis</tissue>
    </source>
</reference>
<reference key="4">
    <citation type="journal article" date="2004" name="Mol. Cell. Proteomics">
        <title>Phosphoproteomic analysis of the developing mouse brain.</title>
        <authorList>
            <person name="Ballif B.A."/>
            <person name="Villen J."/>
            <person name="Beausoleil S.A."/>
            <person name="Schwartz D."/>
            <person name="Gygi S.P."/>
        </authorList>
    </citation>
    <scope>PHOSPHORYLATION [LARGE SCALE ANALYSIS] AT SER-122</scope>
    <scope>IDENTIFICATION BY MASS SPECTROMETRY [LARGE SCALE ANALYSIS]</scope>
    <source>
        <tissue>Embryonic brain</tissue>
    </source>
</reference>
<reference key="5">
    <citation type="journal article" date="2007" name="Proc. Natl. Acad. Sci. U.S.A.">
        <title>Large-scale phosphorylation analysis of mouse liver.</title>
        <authorList>
            <person name="Villen J."/>
            <person name="Beausoleil S.A."/>
            <person name="Gerber S.A."/>
            <person name="Gygi S.P."/>
        </authorList>
    </citation>
    <scope>PHOSPHORYLATION [LARGE SCALE ANALYSIS] AT SER-122</scope>
    <scope>IDENTIFICATION BY MASS SPECTROMETRY [LARGE SCALE ANALYSIS]</scope>
    <source>
        <tissue>Liver</tissue>
    </source>
</reference>
<reference key="6">
    <citation type="journal article" date="2010" name="Cell">
        <title>A tissue-specific atlas of mouse protein phosphorylation and expression.</title>
        <authorList>
            <person name="Huttlin E.L."/>
            <person name="Jedrychowski M.P."/>
            <person name="Elias J.E."/>
            <person name="Goswami T."/>
            <person name="Rad R."/>
            <person name="Beausoleil S.A."/>
            <person name="Villen J."/>
            <person name="Haas W."/>
            <person name="Sowa M.E."/>
            <person name="Gygi S.P."/>
        </authorList>
    </citation>
    <scope>PHOSPHORYLATION [LARGE SCALE ANALYSIS] AT SER-122</scope>
    <scope>IDENTIFICATION BY MASS SPECTROMETRY [LARGE SCALE ANALYSIS]</scope>
    <source>
        <tissue>Liver</tissue>
        <tissue>Lung</tissue>
        <tissue>Spleen</tissue>
        <tissue>Testis</tissue>
    </source>
</reference>
<name>CHRC1_MOUSE</name>
<feature type="initiator methionine" description="Removed" evidence="2">
    <location>
        <position position="1"/>
    </location>
</feature>
<feature type="chain" id="PRO_0000089657" description="Chromatin accessibility complex protein 1">
    <location>
        <begin position="2"/>
        <end position="129"/>
    </location>
</feature>
<feature type="region of interest" description="Disordered" evidence="4">
    <location>
        <begin position="109"/>
        <end position="129"/>
    </location>
</feature>
<feature type="coiled-coil region" evidence="3">
    <location>
        <begin position="104"/>
        <end position="120"/>
    </location>
</feature>
<feature type="compositionally biased region" description="Acidic residues" evidence="4">
    <location>
        <begin position="112"/>
        <end position="123"/>
    </location>
</feature>
<feature type="modified residue" description="N-acetylalanine" evidence="2">
    <location>
        <position position="2"/>
    </location>
</feature>
<feature type="modified residue" description="N6-acetyllysine" evidence="2">
    <location>
        <position position="102"/>
    </location>
</feature>
<feature type="modified residue" description="Phosphoserine" evidence="6 7 8">
    <location>
        <position position="122"/>
    </location>
</feature>
<accession>Q9JKP8</accession>
<accession>Q91VG2</accession>
<keyword id="KW-0007">Acetylation</keyword>
<keyword id="KW-0175">Coiled coil</keyword>
<keyword id="KW-0238">DNA-binding</keyword>
<keyword id="KW-0239">DNA-directed DNA polymerase</keyword>
<keyword id="KW-0548">Nucleotidyltransferase</keyword>
<keyword id="KW-0539">Nucleus</keyword>
<keyword id="KW-0597">Phosphoprotein</keyword>
<keyword id="KW-1185">Reference proteome</keyword>
<keyword id="KW-0808">Transferase</keyword>
<sequence length="129" mass="14127">MADAAVGKEKCGDQRLVSLPLSRIRVIMKSSPEVSSINQEALVLTAKATELFVQYLATCSYRHGSGKAKKALTYSDLASTAEDSETLQFLADILPKKILASKYLKMLKEKREEEEDNEDDGSDLGEALA</sequence>
<protein>
    <recommendedName>
        <fullName>Chromatin accessibility complex protein 1</fullName>
        <shortName>CHRAC-1</shortName>
    </recommendedName>
    <alternativeName>
        <fullName>DNA polymerase epsilon subunit p15</fullName>
    </alternativeName>
    <alternativeName>
        <fullName>NF-YC-like protein</fullName>
    </alternativeName>
    <alternativeName>
        <fullName>YC-like protein 1</fullName>
        <shortName>YCL1</shortName>
    </alternativeName>
</protein>
<comment type="function">
    <text evidence="1 2">Forms a complex with DNA polymerase epsilon subunit POLE3 and binds naked DNA, which is then incorporated into chromatin, aided by the nucleosome remodeling activity of ISWI/SNF2H and ACF1. Does not enhance nucleosome sliding activity of the ACF-5 ISWI chromatin remodeling complex (By similarity).</text>
</comment>
<comment type="subunit">
    <text evidence="2">Heterodimer with POLE3; binds to DNA (By similarity). Component of the CHRAC ISWI chromatin remodeling complex at least composed of SMARCA5/SNF2H, BAZ1A/ACF1, CHRAC1 and POLE3; the complex preferentially binds DNA through the CHRAC1-POLE3 heterodimer and possesses ATP-dependent nucleosome-remodeling activity (By similarity). Within the complex, the heterodimer with POLE3 interacts with SMARCA5/SNF2H; the interaction is direct and enhances nucleosome sliding activity by the SMARCA5/SNF2H and BAZ1A/ACF1 interaction (By similarity). Within the complex, the heterodimer with POLE3 interacts with BAZ1A/ACF1; the interactions are direct (By similarity).</text>
</comment>
<comment type="subcellular location">
    <subcellularLocation>
        <location evidence="5">Nucleus</location>
    </subcellularLocation>
</comment>
<comment type="tissue specificity">
    <text>Ubiquitously expressed.</text>
</comment>
<evidence type="ECO:0000250" key="1"/>
<evidence type="ECO:0000250" key="2">
    <source>
        <dbReference type="UniProtKB" id="Q9NRG0"/>
    </source>
</evidence>
<evidence type="ECO:0000255" key="3"/>
<evidence type="ECO:0000256" key="4">
    <source>
        <dbReference type="SAM" id="MobiDB-lite"/>
    </source>
</evidence>
<evidence type="ECO:0000305" key="5"/>
<evidence type="ECO:0007744" key="6">
    <source>
    </source>
</evidence>
<evidence type="ECO:0007744" key="7">
    <source>
    </source>
</evidence>
<evidence type="ECO:0007744" key="8">
    <source>
    </source>
</evidence>
<gene>
    <name type="primary">Chrac1</name>
</gene>
<dbReference type="EMBL" id="AF230805">
    <property type="protein sequence ID" value="AAF67145.1"/>
    <property type="molecule type" value="mRNA"/>
</dbReference>
<dbReference type="EMBL" id="AK010812">
    <property type="protein sequence ID" value="BAB27197.1"/>
    <property type="molecule type" value="mRNA"/>
</dbReference>
<dbReference type="EMBL" id="BC016593">
    <property type="protein sequence ID" value="AAH16593.1"/>
    <property type="molecule type" value="mRNA"/>
</dbReference>
<dbReference type="EMBL" id="BC061043">
    <property type="protein sequence ID" value="AAH61043.1"/>
    <property type="molecule type" value="mRNA"/>
</dbReference>
<dbReference type="CCDS" id="CCDS27516.1"/>
<dbReference type="RefSeq" id="NP_444298.1">
    <property type="nucleotide sequence ID" value="NM_053068.3"/>
</dbReference>
<dbReference type="SMR" id="Q9JKP8"/>
<dbReference type="BioGRID" id="220245">
    <property type="interactions" value="1"/>
</dbReference>
<dbReference type="ComplexPortal" id="CPX-858">
    <property type="entry name" value="CHRAC chromatin remodeling complex"/>
</dbReference>
<dbReference type="FunCoup" id="Q9JKP8">
    <property type="interactions" value="2317"/>
</dbReference>
<dbReference type="IntAct" id="Q9JKP8">
    <property type="interactions" value="2"/>
</dbReference>
<dbReference type="MINT" id="Q9JKP8"/>
<dbReference type="STRING" id="10090.ENSMUSP00000087197"/>
<dbReference type="iPTMnet" id="Q9JKP8"/>
<dbReference type="PhosphoSitePlus" id="Q9JKP8"/>
<dbReference type="SwissPalm" id="Q9JKP8"/>
<dbReference type="jPOST" id="Q9JKP8"/>
<dbReference type="PaxDb" id="10090-ENSMUSP00000087197"/>
<dbReference type="PeptideAtlas" id="Q9JKP8"/>
<dbReference type="ProteomicsDB" id="279073"/>
<dbReference type="Pumba" id="Q9JKP8"/>
<dbReference type="Antibodypedia" id="27623">
    <property type="antibodies" value="190 antibodies from 29 providers"/>
</dbReference>
<dbReference type="DNASU" id="93696"/>
<dbReference type="Ensembl" id="ENSMUST00000089765.9">
    <property type="protein sequence ID" value="ENSMUSP00000087197.3"/>
    <property type="gene ID" value="ENSMUSG00000068391.9"/>
</dbReference>
<dbReference type="GeneID" id="93696"/>
<dbReference type="KEGG" id="mmu:93696"/>
<dbReference type="UCSC" id="uc007wbq.1">
    <property type="organism name" value="mouse"/>
</dbReference>
<dbReference type="AGR" id="MGI:2135796"/>
<dbReference type="CTD" id="54108"/>
<dbReference type="MGI" id="MGI:2135796">
    <property type="gene designation" value="Chrac1"/>
</dbReference>
<dbReference type="VEuPathDB" id="HostDB:ENSMUSG00000068391"/>
<dbReference type="eggNOG" id="KOG1657">
    <property type="taxonomic scope" value="Eukaryota"/>
</dbReference>
<dbReference type="GeneTree" id="ENSGT00510000048543"/>
<dbReference type="InParanoid" id="Q9JKP8"/>
<dbReference type="OMA" id="FLEYKHI"/>
<dbReference type="OrthoDB" id="1291358at2759"/>
<dbReference type="PhylomeDB" id="Q9JKP8"/>
<dbReference type="TreeFam" id="TF350392"/>
<dbReference type="BioGRID-ORCS" id="93696">
    <property type="hits" value="3 hits in 82 CRISPR screens"/>
</dbReference>
<dbReference type="ChiTaRS" id="Chrac1">
    <property type="organism name" value="mouse"/>
</dbReference>
<dbReference type="PRO" id="PR:Q9JKP8"/>
<dbReference type="Proteomes" id="UP000000589">
    <property type="component" value="Chromosome 15"/>
</dbReference>
<dbReference type="RNAct" id="Q9JKP8">
    <property type="molecule type" value="protein"/>
</dbReference>
<dbReference type="Bgee" id="ENSMUSG00000068391">
    <property type="expression patterns" value="Expressed in saccule of membranous labyrinth and 264 other cell types or tissues"/>
</dbReference>
<dbReference type="ExpressionAtlas" id="Q9JKP8">
    <property type="expression patterns" value="baseline and differential"/>
</dbReference>
<dbReference type="GO" id="GO:0008623">
    <property type="term" value="C:CHRAC"/>
    <property type="evidence" value="ECO:0000303"/>
    <property type="project" value="ComplexPortal"/>
</dbReference>
<dbReference type="GO" id="GO:0005721">
    <property type="term" value="C:pericentric heterochromatin"/>
    <property type="evidence" value="ECO:0000314"/>
    <property type="project" value="ComplexPortal"/>
</dbReference>
<dbReference type="GO" id="GO:0003677">
    <property type="term" value="F:DNA binding"/>
    <property type="evidence" value="ECO:0007669"/>
    <property type="project" value="UniProtKB-KW"/>
</dbReference>
<dbReference type="GO" id="GO:0003887">
    <property type="term" value="F:DNA-directed DNA polymerase activity"/>
    <property type="evidence" value="ECO:0007669"/>
    <property type="project" value="UniProtKB-KW"/>
</dbReference>
<dbReference type="GO" id="GO:0046982">
    <property type="term" value="F:protein heterodimerization activity"/>
    <property type="evidence" value="ECO:0007669"/>
    <property type="project" value="InterPro"/>
</dbReference>
<dbReference type="GO" id="GO:0006338">
    <property type="term" value="P:chromatin remodeling"/>
    <property type="evidence" value="ECO:0000266"/>
    <property type="project" value="ComplexPortal"/>
</dbReference>
<dbReference type="GO" id="GO:0006334">
    <property type="term" value="P:nucleosome assembly"/>
    <property type="evidence" value="ECO:0000266"/>
    <property type="project" value="ComplexPortal"/>
</dbReference>
<dbReference type="GO" id="GO:0006275">
    <property type="term" value="P:regulation of DNA replication"/>
    <property type="evidence" value="ECO:0000266"/>
    <property type="project" value="ComplexPortal"/>
</dbReference>
<dbReference type="CDD" id="cd22924">
    <property type="entry name" value="HFD_CHRAC1-like"/>
    <property type="match status" value="1"/>
</dbReference>
<dbReference type="FunFam" id="1.10.20.10:FF:000048">
    <property type="entry name" value="Chromatin accessibility complex subunit 1"/>
    <property type="match status" value="1"/>
</dbReference>
<dbReference type="Gene3D" id="1.10.20.10">
    <property type="entry name" value="Histone, subunit A"/>
    <property type="match status" value="1"/>
</dbReference>
<dbReference type="InterPro" id="IPR003958">
    <property type="entry name" value="CBFA_NFYB_domain"/>
</dbReference>
<dbReference type="InterPro" id="IPR009072">
    <property type="entry name" value="Histone-fold"/>
</dbReference>
<dbReference type="InterPro" id="IPR050568">
    <property type="entry name" value="Transcr_DNA_Rep_Reg"/>
</dbReference>
<dbReference type="PANTHER" id="PTHR10252:SF54">
    <property type="entry name" value="CHROMATIN ACCESSIBILITY COMPLEX PROTEIN 1"/>
    <property type="match status" value="1"/>
</dbReference>
<dbReference type="PANTHER" id="PTHR10252">
    <property type="entry name" value="HISTONE-LIKE TRANSCRIPTION FACTOR CCAAT-RELATED"/>
    <property type="match status" value="1"/>
</dbReference>
<dbReference type="Pfam" id="PF00808">
    <property type="entry name" value="CBFD_NFYB_HMF"/>
    <property type="match status" value="1"/>
</dbReference>
<dbReference type="SUPFAM" id="SSF47113">
    <property type="entry name" value="Histone-fold"/>
    <property type="match status" value="1"/>
</dbReference>
<proteinExistence type="evidence at protein level"/>
<organism>
    <name type="scientific">Mus musculus</name>
    <name type="common">Mouse</name>
    <dbReference type="NCBI Taxonomy" id="10090"/>
    <lineage>
        <taxon>Eukaryota</taxon>
        <taxon>Metazoa</taxon>
        <taxon>Chordata</taxon>
        <taxon>Craniata</taxon>
        <taxon>Vertebrata</taxon>
        <taxon>Euteleostomi</taxon>
        <taxon>Mammalia</taxon>
        <taxon>Eutheria</taxon>
        <taxon>Euarchontoglires</taxon>
        <taxon>Glires</taxon>
        <taxon>Rodentia</taxon>
        <taxon>Myomorpha</taxon>
        <taxon>Muroidea</taxon>
        <taxon>Muridae</taxon>
        <taxon>Murinae</taxon>
        <taxon>Mus</taxon>
        <taxon>Mus</taxon>
    </lineage>
</organism>